<evidence type="ECO:0000250" key="1"/>
<evidence type="ECO:0000305" key="2"/>
<feature type="chain" id="PRO_0000228028" description="Mitochondrial import inner membrane translocase subunit TIM8">
    <location>
        <begin position="1"/>
        <end position="87"/>
    </location>
</feature>
<feature type="short sequence motif" description="Twin CX3C motif">
    <location>
        <begin position="44"/>
        <end position="68"/>
    </location>
</feature>
<feature type="disulfide bond" evidence="1">
    <location>
        <begin position="44"/>
        <end position="68"/>
    </location>
</feature>
<feature type="disulfide bond" evidence="1">
    <location>
        <begin position="48"/>
        <end position="64"/>
    </location>
</feature>
<proteinExistence type="inferred from homology"/>
<keyword id="KW-0143">Chaperone</keyword>
<keyword id="KW-1015">Disulfide bond</keyword>
<keyword id="KW-0472">Membrane</keyword>
<keyword id="KW-0479">Metal-binding</keyword>
<keyword id="KW-0496">Mitochondrion</keyword>
<keyword id="KW-0999">Mitochondrion inner membrane</keyword>
<keyword id="KW-0653">Protein transport</keyword>
<keyword id="KW-1185">Reference proteome</keyword>
<keyword id="KW-0811">Translocation</keyword>
<keyword id="KW-0813">Transport</keyword>
<keyword id="KW-0862">Zinc</keyword>
<comment type="function">
    <text evidence="1">Mitochondrial intermembrane chaperone that participates in the import and insertion of some multi-pass transmembrane proteins into the mitochondrial inner membrane. Also required for the transfer of beta-barrel precursors from the TOM complex to the sorting and assembly machinery (SAM complex) of the outer membrane. Acts as a chaperone-like protein that protects the hydrophobic precursors from aggregation and guide them through the mitochondrial intermembrane space. The TIM8-TIM13 complex is non essential and only mediates the import of few proteins, while the predominant TIM9-TIM10 70 kDa complex is crucial and mediates the import of much more proteins (By similarity).</text>
</comment>
<comment type="subunit">
    <text evidence="1">Heterohexamer; composed of 3 copies of TIM8 and 3 copies of TIM13, named soluble 70 kDa complex. Associates with the TIM22 complex, whose core is composed of TIM22 and TIM54. Interacts with the transmembrane regions of multi-pass transmembrane proteins in transit (By similarity).</text>
</comment>
<comment type="subcellular location">
    <subcellularLocation>
        <location evidence="1">Mitochondrion inner membrane</location>
        <topology evidence="1">Peripheral membrane protein</topology>
        <orientation evidence="1">Intermembrane side</orientation>
    </subcellularLocation>
</comment>
<comment type="domain">
    <text evidence="1">The twin CX3C motif contains 4 conserved Cys residues that form 2 disulfide bonds in the mitochondrial intermembrane space. However, during the transit of TIM8 from cytoplasm into mitochondrion, the Cys residues probably coordinate zinc, thereby preventing folding and allowing its transfer across mitochondrial outer membrane (By similarity).</text>
</comment>
<comment type="similarity">
    <text evidence="2">Belongs to the small Tim family.</text>
</comment>
<protein>
    <recommendedName>
        <fullName>Mitochondrial import inner membrane translocase subunit TIM8</fullName>
    </recommendedName>
</protein>
<reference key="1">
    <citation type="journal article" date="2004" name="Science">
        <title>The Ashbya gossypii genome as a tool for mapping the ancient Saccharomyces cerevisiae genome.</title>
        <authorList>
            <person name="Dietrich F.S."/>
            <person name="Voegeli S."/>
            <person name="Brachat S."/>
            <person name="Lerch A."/>
            <person name="Gates K."/>
            <person name="Steiner S."/>
            <person name="Mohr C."/>
            <person name="Poehlmann R."/>
            <person name="Luedi P."/>
            <person name="Choi S."/>
            <person name="Wing R.A."/>
            <person name="Flavier A."/>
            <person name="Gaffney T.D."/>
            <person name="Philippsen P."/>
        </authorList>
    </citation>
    <scope>NUCLEOTIDE SEQUENCE [LARGE SCALE GENOMIC DNA]</scope>
    <source>
        <strain>ATCC 10895 / CBS 109.51 / FGSC 9923 / NRRL Y-1056</strain>
    </source>
</reference>
<reference key="2">
    <citation type="journal article" date="2013" name="G3 (Bethesda)">
        <title>Genomes of Ashbya fungi isolated from insects reveal four mating-type loci, numerous translocations, lack of transposons, and distinct gene duplications.</title>
        <authorList>
            <person name="Dietrich F.S."/>
            <person name="Voegeli S."/>
            <person name="Kuo S."/>
            <person name="Philippsen P."/>
        </authorList>
    </citation>
    <scope>GENOME REANNOTATION</scope>
    <source>
        <strain>ATCC 10895 / CBS 109.51 / FGSC 9923 / NRRL Y-1056</strain>
    </source>
</reference>
<organism>
    <name type="scientific">Eremothecium gossypii (strain ATCC 10895 / CBS 109.51 / FGSC 9923 / NRRL Y-1056)</name>
    <name type="common">Yeast</name>
    <name type="synonym">Ashbya gossypii</name>
    <dbReference type="NCBI Taxonomy" id="284811"/>
    <lineage>
        <taxon>Eukaryota</taxon>
        <taxon>Fungi</taxon>
        <taxon>Dikarya</taxon>
        <taxon>Ascomycota</taxon>
        <taxon>Saccharomycotina</taxon>
        <taxon>Saccharomycetes</taxon>
        <taxon>Saccharomycetales</taxon>
        <taxon>Saccharomycetaceae</taxon>
        <taxon>Eremothecium</taxon>
    </lineage>
</organism>
<dbReference type="EMBL" id="AE016815">
    <property type="protein sequence ID" value="AAS50697.1"/>
    <property type="molecule type" value="Genomic_DNA"/>
</dbReference>
<dbReference type="RefSeq" id="NP_982873.1">
    <property type="nucleotide sequence ID" value="NM_208226.1"/>
</dbReference>
<dbReference type="SMR" id="Q75DU7"/>
<dbReference type="FunCoup" id="Q75DU7">
    <property type="interactions" value="545"/>
</dbReference>
<dbReference type="STRING" id="284811.Q75DU7"/>
<dbReference type="EnsemblFungi" id="AAS50697">
    <property type="protein sequence ID" value="AAS50697"/>
    <property type="gene ID" value="AGOS_ABL074C"/>
</dbReference>
<dbReference type="GeneID" id="4618954"/>
<dbReference type="KEGG" id="ago:AGOS_ABL074C"/>
<dbReference type="eggNOG" id="KOG3489">
    <property type="taxonomic scope" value="Eukaryota"/>
</dbReference>
<dbReference type="HOGENOM" id="CLU_141397_1_0_1"/>
<dbReference type="InParanoid" id="Q75DU7"/>
<dbReference type="OMA" id="NEICWDK"/>
<dbReference type="OrthoDB" id="344165at2759"/>
<dbReference type="Proteomes" id="UP000000591">
    <property type="component" value="Chromosome II"/>
</dbReference>
<dbReference type="GO" id="GO:0005743">
    <property type="term" value="C:mitochondrial inner membrane"/>
    <property type="evidence" value="ECO:0007669"/>
    <property type="project" value="UniProtKB-SubCell"/>
</dbReference>
<dbReference type="GO" id="GO:0042719">
    <property type="term" value="C:mitochondrial intermembrane space protein transporter complex"/>
    <property type="evidence" value="ECO:0007669"/>
    <property type="project" value="EnsemblFungi"/>
</dbReference>
<dbReference type="GO" id="GO:0046872">
    <property type="term" value="F:metal ion binding"/>
    <property type="evidence" value="ECO:0007669"/>
    <property type="project" value="UniProtKB-KW"/>
</dbReference>
<dbReference type="GO" id="GO:0140318">
    <property type="term" value="F:protein transporter activity"/>
    <property type="evidence" value="ECO:0007669"/>
    <property type="project" value="EnsemblFungi"/>
</dbReference>
<dbReference type="GO" id="GO:0045039">
    <property type="term" value="P:protein insertion into mitochondrial inner membrane"/>
    <property type="evidence" value="ECO:0007669"/>
    <property type="project" value="EnsemblFungi"/>
</dbReference>
<dbReference type="Gene3D" id="1.10.287.810">
    <property type="entry name" value="Mitochondrial import inner membrane translocase subunit tim13 like domains"/>
    <property type="match status" value="1"/>
</dbReference>
<dbReference type="InterPro" id="IPR004217">
    <property type="entry name" value="Tim10-like"/>
</dbReference>
<dbReference type="InterPro" id="IPR035427">
    <property type="entry name" value="Tim10-like_dom_sf"/>
</dbReference>
<dbReference type="Pfam" id="PF02953">
    <property type="entry name" value="zf-Tim10_DDP"/>
    <property type="match status" value="1"/>
</dbReference>
<dbReference type="SUPFAM" id="SSF144122">
    <property type="entry name" value="Tim10-like"/>
    <property type="match status" value="1"/>
</dbReference>
<sequence>MSGISPTELQNLDEPSKKEIMGFLETENSKQKVQMSIHQFTNLCFKNCIHSVQSADLSAQENQCLKDCVNRFLDTNIRIVKGLQSIQ</sequence>
<gene>
    <name type="primary">TIM8</name>
    <name type="ordered locus">ABL074C</name>
</gene>
<name>TIM8_EREGS</name>
<accession>Q75DU7</accession>